<gene>
    <name evidence="1" type="primary">fadR</name>
    <name type="ordered locus">SO_2885</name>
</gene>
<feature type="chain" id="PRO_0000050634" description="Fatty acid metabolism regulator protein">
    <location>
        <begin position="1"/>
        <end position="240"/>
    </location>
</feature>
<feature type="domain" description="HTH gntR-type" evidence="1">
    <location>
        <begin position="6"/>
        <end position="74"/>
    </location>
</feature>
<feature type="DNA-binding region" description="H-T-H motif" evidence="1">
    <location>
        <begin position="34"/>
        <end position="53"/>
    </location>
</feature>
<evidence type="ECO:0000255" key="1">
    <source>
        <dbReference type="HAMAP-Rule" id="MF_00696"/>
    </source>
</evidence>
<protein>
    <recommendedName>
        <fullName evidence="1">Fatty acid metabolism regulator protein</fullName>
    </recommendedName>
</protein>
<sequence>MIINAKGPASFAEKYIVRSIWENKFPPGSILPAERELSELIGVTRTTLREVLQRLARDGWLKIQHGKPTRVNNFWETSGLNILETIADLNPEGFPVLVDQLLSARTNVSAIYFRGALRNNPDTAMEVLAQIHQLEDTAESFAEYDYLLHHTLAFSSGNPLYVLILNGFKGLYSRVGRYYFSSSEARQLALNFYKELELLAKAKNYLDVPALMRTYGINSGKMWLQLRDDMPSSIAQQDSH</sequence>
<comment type="function">
    <text evidence="1">Multifunctional regulator of fatty acid metabolism.</text>
</comment>
<comment type="subunit">
    <text evidence="1">Homodimer.</text>
</comment>
<comment type="subcellular location">
    <subcellularLocation>
        <location evidence="1">Cytoplasm</location>
    </subcellularLocation>
</comment>
<dbReference type="EMBL" id="AE014299">
    <property type="protein sequence ID" value="AAN55901.1"/>
    <property type="molecule type" value="Genomic_DNA"/>
</dbReference>
<dbReference type="RefSeq" id="NP_718457.1">
    <property type="nucleotide sequence ID" value="NC_004347.2"/>
</dbReference>
<dbReference type="RefSeq" id="WP_011072796.1">
    <property type="nucleotide sequence ID" value="NC_004347.2"/>
</dbReference>
<dbReference type="SMR" id="Q8ED80"/>
<dbReference type="STRING" id="211586.SO_2885"/>
<dbReference type="PaxDb" id="211586-SO_2885"/>
<dbReference type="KEGG" id="son:SO_2885"/>
<dbReference type="PATRIC" id="fig|211586.12.peg.2784"/>
<dbReference type="eggNOG" id="COG2186">
    <property type="taxonomic scope" value="Bacteria"/>
</dbReference>
<dbReference type="HOGENOM" id="CLU_017584_9_4_6"/>
<dbReference type="OrthoDB" id="5683977at2"/>
<dbReference type="PhylomeDB" id="Q8ED80"/>
<dbReference type="BioCyc" id="SONE211586:G1GMP-2663-MONOMER"/>
<dbReference type="Proteomes" id="UP000008186">
    <property type="component" value="Chromosome"/>
</dbReference>
<dbReference type="GO" id="GO:0005737">
    <property type="term" value="C:cytoplasm"/>
    <property type="evidence" value="ECO:0007669"/>
    <property type="project" value="UniProtKB-SubCell"/>
</dbReference>
<dbReference type="GO" id="GO:0003677">
    <property type="term" value="F:DNA binding"/>
    <property type="evidence" value="ECO:0007669"/>
    <property type="project" value="UniProtKB-KW"/>
</dbReference>
<dbReference type="GO" id="GO:0003700">
    <property type="term" value="F:DNA-binding transcription factor activity"/>
    <property type="evidence" value="ECO:0007669"/>
    <property type="project" value="UniProtKB-UniRule"/>
</dbReference>
<dbReference type="GO" id="GO:0000062">
    <property type="term" value="F:fatty-acyl-CoA binding"/>
    <property type="evidence" value="ECO:0007669"/>
    <property type="project" value="InterPro"/>
</dbReference>
<dbReference type="GO" id="GO:0006631">
    <property type="term" value="P:fatty acid metabolic process"/>
    <property type="evidence" value="ECO:0007669"/>
    <property type="project" value="UniProtKB-KW"/>
</dbReference>
<dbReference type="GO" id="GO:0019217">
    <property type="term" value="P:regulation of fatty acid metabolic process"/>
    <property type="evidence" value="ECO:0007669"/>
    <property type="project" value="UniProtKB-UniRule"/>
</dbReference>
<dbReference type="CDD" id="cd07377">
    <property type="entry name" value="WHTH_GntR"/>
    <property type="match status" value="1"/>
</dbReference>
<dbReference type="Gene3D" id="1.20.120.530">
    <property type="entry name" value="GntR ligand-binding domain-like"/>
    <property type="match status" value="1"/>
</dbReference>
<dbReference type="Gene3D" id="1.10.10.10">
    <property type="entry name" value="Winged helix-like DNA-binding domain superfamily/Winged helix DNA-binding domain"/>
    <property type="match status" value="1"/>
</dbReference>
<dbReference type="HAMAP" id="MF_00696">
    <property type="entry name" value="HTH_FadR"/>
    <property type="match status" value="1"/>
</dbReference>
<dbReference type="InterPro" id="IPR014178">
    <property type="entry name" value="FA-response_TF_FadR"/>
</dbReference>
<dbReference type="InterPro" id="IPR028374">
    <property type="entry name" value="FadR_C"/>
</dbReference>
<dbReference type="InterPro" id="IPR008920">
    <property type="entry name" value="TF_FadR/GntR_C"/>
</dbReference>
<dbReference type="InterPro" id="IPR000524">
    <property type="entry name" value="Tscrpt_reg_HTH_GntR"/>
</dbReference>
<dbReference type="InterPro" id="IPR036388">
    <property type="entry name" value="WH-like_DNA-bd_sf"/>
</dbReference>
<dbReference type="InterPro" id="IPR036390">
    <property type="entry name" value="WH_DNA-bd_sf"/>
</dbReference>
<dbReference type="NCBIfam" id="TIGR02812">
    <property type="entry name" value="fadR_gamma"/>
    <property type="match status" value="1"/>
</dbReference>
<dbReference type="NCBIfam" id="NF003444">
    <property type="entry name" value="PRK04984.1"/>
    <property type="match status" value="1"/>
</dbReference>
<dbReference type="PANTHER" id="PTHR43537:SF52">
    <property type="entry name" value="FATTY ACID METABOLISM REGULATOR PROTEIN"/>
    <property type="match status" value="1"/>
</dbReference>
<dbReference type="PANTHER" id="PTHR43537">
    <property type="entry name" value="TRANSCRIPTIONAL REGULATOR, GNTR FAMILY"/>
    <property type="match status" value="1"/>
</dbReference>
<dbReference type="Pfam" id="PF07840">
    <property type="entry name" value="FadR_C"/>
    <property type="match status" value="1"/>
</dbReference>
<dbReference type="Pfam" id="PF00392">
    <property type="entry name" value="GntR"/>
    <property type="match status" value="1"/>
</dbReference>
<dbReference type="PRINTS" id="PR00035">
    <property type="entry name" value="HTHGNTR"/>
</dbReference>
<dbReference type="SMART" id="SM00345">
    <property type="entry name" value="HTH_GNTR"/>
    <property type="match status" value="1"/>
</dbReference>
<dbReference type="SUPFAM" id="SSF48008">
    <property type="entry name" value="GntR ligand-binding domain-like"/>
    <property type="match status" value="1"/>
</dbReference>
<dbReference type="SUPFAM" id="SSF46785">
    <property type="entry name" value="Winged helix' DNA-binding domain"/>
    <property type="match status" value="1"/>
</dbReference>
<dbReference type="PROSITE" id="PS50949">
    <property type="entry name" value="HTH_GNTR"/>
    <property type="match status" value="1"/>
</dbReference>
<accession>Q8ED80</accession>
<organism>
    <name type="scientific">Shewanella oneidensis (strain ATCC 700550 / JCM 31522 / CIP 106686 / LMG 19005 / NCIMB 14063 / MR-1)</name>
    <dbReference type="NCBI Taxonomy" id="211586"/>
    <lineage>
        <taxon>Bacteria</taxon>
        <taxon>Pseudomonadati</taxon>
        <taxon>Pseudomonadota</taxon>
        <taxon>Gammaproteobacteria</taxon>
        <taxon>Alteromonadales</taxon>
        <taxon>Shewanellaceae</taxon>
        <taxon>Shewanella</taxon>
    </lineage>
</organism>
<name>FADR_SHEON</name>
<proteinExistence type="inferred from homology"/>
<reference key="1">
    <citation type="journal article" date="2002" name="Nat. Biotechnol.">
        <title>Genome sequence of the dissimilatory metal ion-reducing bacterium Shewanella oneidensis.</title>
        <authorList>
            <person name="Heidelberg J.F."/>
            <person name="Paulsen I.T."/>
            <person name="Nelson K.E."/>
            <person name="Gaidos E.J."/>
            <person name="Nelson W.C."/>
            <person name="Read T.D."/>
            <person name="Eisen J.A."/>
            <person name="Seshadri R."/>
            <person name="Ward N.L."/>
            <person name="Methe B.A."/>
            <person name="Clayton R.A."/>
            <person name="Meyer T."/>
            <person name="Tsapin A."/>
            <person name="Scott J."/>
            <person name="Beanan M.J."/>
            <person name="Brinkac L.M."/>
            <person name="Daugherty S.C."/>
            <person name="DeBoy R.T."/>
            <person name="Dodson R.J."/>
            <person name="Durkin A.S."/>
            <person name="Haft D.H."/>
            <person name="Kolonay J.F."/>
            <person name="Madupu R."/>
            <person name="Peterson J.D."/>
            <person name="Umayam L.A."/>
            <person name="White O."/>
            <person name="Wolf A.M."/>
            <person name="Vamathevan J.J."/>
            <person name="Weidman J.F."/>
            <person name="Impraim M."/>
            <person name="Lee K."/>
            <person name="Berry K.J."/>
            <person name="Lee C."/>
            <person name="Mueller J."/>
            <person name="Khouri H.M."/>
            <person name="Gill J."/>
            <person name="Utterback T.R."/>
            <person name="McDonald L.A."/>
            <person name="Feldblyum T.V."/>
            <person name="Smith H.O."/>
            <person name="Venter J.C."/>
            <person name="Nealson K.H."/>
            <person name="Fraser C.M."/>
        </authorList>
    </citation>
    <scope>NUCLEOTIDE SEQUENCE [LARGE SCALE GENOMIC DNA]</scope>
    <source>
        <strain>ATCC 700550 / JCM 31522 / CIP 106686 / LMG 19005 / NCIMB 14063 / MR-1</strain>
    </source>
</reference>
<keyword id="KW-0010">Activator</keyword>
<keyword id="KW-0963">Cytoplasm</keyword>
<keyword id="KW-0238">DNA-binding</keyword>
<keyword id="KW-0276">Fatty acid metabolism</keyword>
<keyword id="KW-0443">Lipid metabolism</keyword>
<keyword id="KW-1185">Reference proteome</keyword>
<keyword id="KW-0678">Repressor</keyword>
<keyword id="KW-0804">Transcription</keyword>
<keyword id="KW-0805">Transcription regulation</keyword>